<proteinExistence type="evidence at protein level"/>
<name>H12_MOUSE</name>
<organism>
    <name type="scientific">Mus musculus</name>
    <name type="common">Mouse</name>
    <dbReference type="NCBI Taxonomy" id="10090"/>
    <lineage>
        <taxon>Eukaryota</taxon>
        <taxon>Metazoa</taxon>
        <taxon>Chordata</taxon>
        <taxon>Craniata</taxon>
        <taxon>Vertebrata</taxon>
        <taxon>Euteleostomi</taxon>
        <taxon>Mammalia</taxon>
        <taxon>Eutheria</taxon>
        <taxon>Euarchontoglires</taxon>
        <taxon>Glires</taxon>
        <taxon>Rodentia</taxon>
        <taxon>Myomorpha</taxon>
        <taxon>Muroidea</taxon>
        <taxon>Muridae</taxon>
        <taxon>Murinae</taxon>
        <taxon>Mus</taxon>
        <taxon>Mus</taxon>
    </lineage>
</organism>
<protein>
    <recommendedName>
        <fullName>Histone H1.2</fullName>
    </recommendedName>
    <alternativeName>
        <fullName>H1 VAR.1</fullName>
    </alternativeName>
    <alternativeName>
        <fullName>H1c</fullName>
    </alternativeName>
</protein>
<keyword id="KW-0007">Acetylation</keyword>
<keyword id="KW-0013">ADP-ribosylation</keyword>
<keyword id="KW-0158">Chromosome</keyword>
<keyword id="KW-0164">Citrullination</keyword>
<keyword id="KW-0238">DNA-binding</keyword>
<keyword id="KW-0379">Hydroxylation</keyword>
<keyword id="KW-0488">Methylation</keyword>
<keyword id="KW-0539">Nucleus</keyword>
<keyword id="KW-0597">Phosphoprotein</keyword>
<keyword id="KW-1185">Reference proteome</keyword>
<accession>P15864</accession>
<comment type="function">
    <text evidence="1 7 8">Histone H1 protein binds to linker DNA between nucleosomes forming the macromolecular structure known as the chromatin fiber. Histones H1 are necessary for the condensation of nucleosome chains into higher-order structured fibers. Also acts as a regulator of individual gene transcription through chromatin remodeling, nucleosome spacing and DNA methylation (By similarity).</text>
</comment>
<comment type="subunit">
    <text evidence="3">Interacts with TSC22D1 isoform 2.</text>
</comment>
<comment type="interaction">
    <interactant intactId="EBI-913436">
        <id>P15864</id>
    </interactant>
    <interactant intactId="EBI-913410">
        <id>Q99MD9</id>
        <label>Nasp</label>
    </interactant>
    <organismsDiffer>false</organismsDiffer>
    <experiments>3</experiments>
</comment>
<comment type="subcellular location">
    <subcellularLocation>
        <location>Nucleus</location>
    </subcellularLocation>
    <subcellularLocation>
        <location>Chromosome</location>
    </subcellularLocation>
    <text evidence="1">Mainly localizes in euchromatin.</text>
</comment>
<comment type="domain">
    <text evidence="1">The C-terminal domain is required for high-affinity binding to chromatin.</text>
</comment>
<comment type="PTM">
    <text evidence="1">H1 histones are progressively phosphorylated during the cell cycle, becoming maximally phosphorylated during late G2 phase and M phase, and being dephosphorylated sharply thereafter.</text>
</comment>
<comment type="PTM">
    <text evidence="9">Crotonylation (Kcr) is specifically present in male germ cells and marks testis-specific genes in post-meiotic cells, including X-linked genes that escape sex chromosome inactivation in haploid cells. Crotonylation marks active promoters and enhancers and confers resistance to transcriptional repressors. It is also associated with post-meiotically activated genes on autosomes.</text>
</comment>
<comment type="PTM">
    <text evidence="3">ADP-ribosylated on Ser-187 in response to DNA damage.</text>
</comment>
<comment type="PTM">
    <text evidence="10">Citrullination at Arg-54 (H1R54ci) by PADI4 takes place within the DNA-binding site of H1 and results in its displacement from chromatin and global chromatin decondensation, thereby promoting pluripotency and stem cell maintenance.</text>
</comment>
<comment type="PTM">
    <text evidence="4">Hydroxybutyrylation of histones is induced by starvation.</text>
</comment>
<comment type="disruption phenotype">
    <text evidence="7 8">No visible phenotype. Triple-deficient mice (H1-2, H1-3 and H1-4) die by midgestation with a broad range of defects. These embryos have about 50% of the normal ratio of H1 to nucleosomes, demonstrating that critical levels of total H1 histones are essential for mouse embryogenesis.</text>
</comment>
<comment type="similarity">
    <text evidence="5">Belongs to the histone H1/H5 family.</text>
</comment>
<sequence length="212" mass="21267">MSEAAPAAPAAAPPAEKAPAKKKAAKKPAGVRRKASGPPVSELITKAVAASKERSGVSLAALKKALAAAGYDVEKNNSRIKLGLKSLVSKGILVQTKGTGASGSFKLNKKAASGEAKPQAKKAGAAKAKKPAGAAKKPKKATGAATPKKAAKKTPKKAKKPAAAAVTKKVAKSPKKAKVTKPKKVKSASKAVKPKAAKPKVAKAKKVAAKKK</sequence>
<reference key="1">
    <citation type="journal article" date="1989" name="Proc. Natl. Acad. Sci. U.S.A.">
        <title>Different 3'-end processing produces two independently regulated mRNAs from a single H1 histone gene.</title>
        <authorList>
            <person name="Cheng G."/>
            <person name="Nandi A."/>
            <person name="Clerk S."/>
            <person name="Skoultchi A.I."/>
        </authorList>
    </citation>
    <scope>NUCLEOTIDE SEQUENCE [GENOMIC DNA]</scope>
</reference>
<reference key="2">
    <citation type="journal article" date="1987" name="J. Biol. Chem.">
        <title>Isolation and characterization of a mouse fully replication-dependent H1 gene within a genomic cluster of core histone genes.</title>
        <authorList>
            <person name="Yang Y.-S."/>
            <person name="Brown D.T."/>
            <person name="Wellman S.E."/>
            <person name="Sittman D.B."/>
        </authorList>
    </citation>
    <scope>NUCLEOTIDE SEQUENCE [GENOMIC DNA]</scope>
</reference>
<reference key="3">
    <citation type="journal article" date="1998" name="Biochim. Biophys. Acta">
        <title>Expression of murine H1 histone genes during postnatal development.</title>
        <authorList>
            <person name="Franke K."/>
            <person name="Drabent B."/>
            <person name="Doenecke D."/>
        </authorList>
    </citation>
    <scope>NUCLEOTIDE SEQUENCE [GENOMIC DNA]</scope>
    <source>
        <strain>BALB/cJ</strain>
    </source>
</reference>
<reference key="4">
    <citation type="journal article" date="2002" name="Genomics">
        <title>The human and mouse replication-dependent histone genes.</title>
        <authorList>
            <person name="Marzluff W.F."/>
            <person name="Gongidi P."/>
            <person name="Woods K.R."/>
            <person name="Jin J."/>
            <person name="Maltais L.J."/>
        </authorList>
    </citation>
    <scope>NUCLEOTIDE SEQUENCE [GENOMIC DNA]</scope>
</reference>
<reference key="5">
    <citation type="journal article" date="1996" name="Biochemistry">
        <title>In vivo phosphorylation of histone H1 variants during the cell cycle.</title>
        <authorList>
            <person name="Talasz H."/>
            <person name="Helliger W."/>
            <person name="Puschendorf B."/>
            <person name="Lindner H."/>
        </authorList>
    </citation>
    <scope>PHOSPHORYLATION</scope>
</reference>
<reference key="6">
    <citation type="journal article" date="2003" name="Mol. Cell. Biol.">
        <title>H1 linker histones are essential for mouse development and affect nucleosome spacing in vivo.</title>
        <authorList>
            <person name="Fan Y."/>
            <person name="Nikitina T."/>
            <person name="Morin-Kensicki E.M."/>
            <person name="Zhao J."/>
            <person name="Magnuson T.R."/>
            <person name="Woodcock C.L."/>
            <person name="Skoultchi A.I."/>
        </authorList>
    </citation>
    <scope>DISRUPTION PHENOTYPE</scope>
    <scope>FUNCTION</scope>
</reference>
<reference key="7">
    <citation type="journal article" date="2005" name="Cell">
        <title>Histone H1 depletion in mammals alters global chromatin structure but causes specific changes in gene regulation.</title>
        <authorList>
            <person name="Fan Y."/>
            <person name="Nikitina T."/>
            <person name="Zhao J."/>
            <person name="Fleury T.J."/>
            <person name="Bhattacharyya R."/>
            <person name="Bouhassira E.E."/>
            <person name="Stein A."/>
            <person name="Woodcock C.L."/>
            <person name="Skoultchi A.I."/>
        </authorList>
    </citation>
    <scope>DISRUPTION PHENOTYPE</scope>
    <scope>FUNCTION</scope>
</reference>
<reference key="8">
    <citation type="journal article" date="2011" name="Cell">
        <title>Identification of 67 histone marks and histone lysine crotonylation as a new type of histone modification.</title>
        <authorList>
            <person name="Tan M."/>
            <person name="Luo H."/>
            <person name="Lee S."/>
            <person name="Jin F."/>
            <person name="Yang J.S."/>
            <person name="Montellier E."/>
            <person name="Buchou T."/>
            <person name="Cheng Z."/>
            <person name="Rousseaux S."/>
            <person name="Rajagopal N."/>
            <person name="Lu Z."/>
            <person name="Ye Z."/>
            <person name="Zhu Q."/>
            <person name="Wysocka J."/>
            <person name="Ye Y."/>
            <person name="Khochbin S."/>
            <person name="Ren B."/>
            <person name="Zhao Y."/>
        </authorList>
    </citation>
    <scope>CROTONYLATION AT LYS-34; LYS-64; LYS-85; LYS-159 AND LYS-168</scope>
</reference>
<reference key="9">
    <citation type="journal article" date="2013" name="Mol. Cell">
        <title>SIRT5-mediated lysine desuccinylation impacts diverse metabolic pathways.</title>
        <authorList>
            <person name="Park J."/>
            <person name="Chen Y."/>
            <person name="Tishkoff D.X."/>
            <person name="Peng C."/>
            <person name="Tan M."/>
            <person name="Dai L."/>
            <person name="Xie Z."/>
            <person name="Zhang Y."/>
            <person name="Zwaans B.M."/>
            <person name="Skinner M.E."/>
            <person name="Lombard D.B."/>
            <person name="Zhao Y."/>
        </authorList>
    </citation>
    <scope>ACETYLATION [LARGE SCALE ANALYSIS] AT SER-2 AND LYS-17</scope>
    <scope>SUCCINYLATION [LARGE SCALE ANALYSIS] AT LYS-97</scope>
    <scope>CLEAVAGE OF INITIATOR METHIONINE [LARGE SCALE ANALYSIS]</scope>
    <scope>IDENTIFICATION BY MASS SPECTROMETRY [LARGE SCALE ANALYSIS]</scope>
    <source>
        <tissue>Embryonic fibroblast</tissue>
    </source>
</reference>
<reference key="10">
    <citation type="journal article" date="2014" name="Nature">
        <title>Citrullination regulates pluripotency and histone H1 binding to chromatin.</title>
        <authorList>
            <person name="Christophorou M.A."/>
            <person name="Castelo-Branco G."/>
            <person name="Halley-Stott R.P."/>
            <person name="Oliveira C.S."/>
            <person name="Loos R."/>
            <person name="Radzisheuskaya A."/>
            <person name="Mowen K.A."/>
            <person name="Bertone P."/>
            <person name="Silva J.C."/>
            <person name="Zernicka-Goetz M."/>
            <person name="Nielsen M.L."/>
            <person name="Gurdon J.B."/>
            <person name="Kouzarides T."/>
        </authorList>
    </citation>
    <scope>CITRULLINATION AT ARG-54</scope>
    <scope>MUTAGENESIS OF ARG-54</scope>
</reference>
<reference key="11">
    <citation type="journal article" date="2014" name="Nat. Chem. Biol.">
        <title>Lysine 2-hydroxyisobutyrylation is a widely distributed active histone mark.</title>
        <authorList>
            <person name="Dai L."/>
            <person name="Peng C."/>
            <person name="Montellier E."/>
            <person name="Lu Z."/>
            <person name="Chen Y."/>
            <person name="Ishii H."/>
            <person name="Debernardi A."/>
            <person name="Buchou T."/>
            <person name="Rousseaux S."/>
            <person name="Jin F."/>
            <person name="Sabari B.R."/>
            <person name="Deng Z."/>
            <person name="Allis C.D."/>
            <person name="Ren B."/>
            <person name="Khochbin S."/>
            <person name="Zhao Y."/>
        </authorList>
    </citation>
    <scope>HYDROXYBUTYRYLATION AT LYS-23; LYS-26; LYS-27; LYS-46; LYS-52; LYS-63; LYS-64; LYS-75; LYS-81; LYS-85; LYS-90; LYS-97; LYS-110; LYS-117; LYS-121; LYS-129; LYS-136; LYS-148; LYS-159; LYS-168 AND LYS-212</scope>
</reference>
<gene>
    <name evidence="3" type="primary">H1-2</name>
    <name evidence="12" type="synonym">H1f2</name>
    <name evidence="12" type="synonym">Hist1h1c</name>
</gene>
<dbReference type="EMBL" id="M25365">
    <property type="protein sequence ID" value="AAA37808.1"/>
    <property type="molecule type" value="Genomic_DNA"/>
</dbReference>
<dbReference type="EMBL" id="J03482">
    <property type="protein sequence ID" value="AAA37807.1"/>
    <property type="molecule type" value="Genomic_DNA"/>
</dbReference>
<dbReference type="EMBL" id="Y12291">
    <property type="protein sequence ID" value="CAA72970.1"/>
    <property type="molecule type" value="Genomic_DNA"/>
</dbReference>
<dbReference type="EMBL" id="AY158905">
    <property type="protein sequence ID" value="AAO06216.1"/>
    <property type="molecule type" value="Genomic_DNA"/>
</dbReference>
<dbReference type="CCDS" id="CCDS26361.1"/>
<dbReference type="PIR" id="A28470">
    <property type="entry name" value="A28470"/>
</dbReference>
<dbReference type="PIR" id="B35245">
    <property type="entry name" value="B35245"/>
</dbReference>
<dbReference type="RefSeq" id="NP_056601.1">
    <property type="nucleotide sequence ID" value="NM_015786.3"/>
</dbReference>
<dbReference type="SMR" id="P15864"/>
<dbReference type="BioGRID" id="206061">
    <property type="interactions" value="33"/>
</dbReference>
<dbReference type="DIP" id="DIP-35245N"/>
<dbReference type="FunCoup" id="P15864">
    <property type="interactions" value="366"/>
</dbReference>
<dbReference type="IntAct" id="P15864">
    <property type="interactions" value="8"/>
</dbReference>
<dbReference type="MINT" id="P15864"/>
<dbReference type="STRING" id="10090.ENSMUSP00000045816"/>
<dbReference type="GlyGen" id="P15864">
    <property type="glycosylation" value="1 site, 1 O-linked glycan (1 site)"/>
</dbReference>
<dbReference type="iPTMnet" id="P15864"/>
<dbReference type="PhosphoSitePlus" id="P15864"/>
<dbReference type="jPOST" id="P15864"/>
<dbReference type="PaxDb" id="10090-ENSMUSP00000045816"/>
<dbReference type="PeptideAtlas" id="P15864"/>
<dbReference type="ProteomicsDB" id="271491"/>
<dbReference type="Pumba" id="P15864"/>
<dbReference type="Antibodypedia" id="25499">
    <property type="antibodies" value="465 antibodies from 32 providers"/>
</dbReference>
<dbReference type="DNASU" id="50708"/>
<dbReference type="Ensembl" id="ENSMUST00000040914.3">
    <property type="protein sequence ID" value="ENSMUSP00000045816.2"/>
    <property type="gene ID" value="ENSMUSG00000036181.3"/>
</dbReference>
<dbReference type="GeneID" id="50708"/>
<dbReference type="KEGG" id="mmu:50708"/>
<dbReference type="UCSC" id="uc007puq.3">
    <property type="organism name" value="mouse"/>
</dbReference>
<dbReference type="AGR" id="MGI:1931526"/>
<dbReference type="CTD" id="50708"/>
<dbReference type="MGI" id="MGI:1931526">
    <property type="gene designation" value="H1f2"/>
</dbReference>
<dbReference type="VEuPathDB" id="HostDB:ENSMUSG00000036181"/>
<dbReference type="eggNOG" id="KOG4012">
    <property type="taxonomic scope" value="Eukaryota"/>
</dbReference>
<dbReference type="GeneTree" id="ENSGT00940000163082"/>
<dbReference type="HOGENOM" id="CLU_052897_7_0_1"/>
<dbReference type="InParanoid" id="P15864"/>
<dbReference type="OMA" id="THPSWID"/>
<dbReference type="OrthoDB" id="9634976at2759"/>
<dbReference type="PhylomeDB" id="P15864"/>
<dbReference type="TreeFam" id="TF313664"/>
<dbReference type="Reactome" id="R-MMU-140342">
    <property type="pathway name" value="Apoptosis induced DNA fragmentation"/>
</dbReference>
<dbReference type="Reactome" id="R-MMU-2559584">
    <property type="pathway name" value="Formation of Senescence-Associated Heterochromatin Foci (SAHF)"/>
</dbReference>
<dbReference type="BioGRID-ORCS" id="50708">
    <property type="hits" value="4 hits in 80 CRISPR screens"/>
</dbReference>
<dbReference type="CD-CODE" id="CE726F99">
    <property type="entry name" value="Postsynaptic density"/>
</dbReference>
<dbReference type="ChiTaRS" id="Hist1h1c">
    <property type="organism name" value="mouse"/>
</dbReference>
<dbReference type="PRO" id="PR:P15864"/>
<dbReference type="Proteomes" id="UP000000589">
    <property type="component" value="Chromosome 13"/>
</dbReference>
<dbReference type="RNAct" id="P15864">
    <property type="molecule type" value="protein"/>
</dbReference>
<dbReference type="Bgee" id="ENSMUSG00000036181">
    <property type="expression patterns" value="Expressed in vault of skull and 260 other cell types or tissues"/>
</dbReference>
<dbReference type="ExpressionAtlas" id="P15864">
    <property type="expression patterns" value="baseline and differential"/>
</dbReference>
<dbReference type="GO" id="GO:0000791">
    <property type="term" value="C:euchromatin"/>
    <property type="evidence" value="ECO:0000314"/>
    <property type="project" value="MGI"/>
</dbReference>
<dbReference type="GO" id="GO:0000786">
    <property type="term" value="C:nucleosome"/>
    <property type="evidence" value="ECO:0007669"/>
    <property type="project" value="InterPro"/>
</dbReference>
<dbReference type="GO" id="GO:0005634">
    <property type="term" value="C:nucleus"/>
    <property type="evidence" value="ECO:0007669"/>
    <property type="project" value="UniProtKB-SubCell"/>
</dbReference>
<dbReference type="GO" id="GO:0031490">
    <property type="term" value="F:chromatin DNA binding"/>
    <property type="evidence" value="ECO:0007669"/>
    <property type="project" value="Ensembl"/>
</dbReference>
<dbReference type="GO" id="GO:0003677">
    <property type="term" value="F:DNA binding"/>
    <property type="evidence" value="ECO:0000314"/>
    <property type="project" value="MGI"/>
</dbReference>
<dbReference type="GO" id="GO:0030527">
    <property type="term" value="F:structural constituent of chromatin"/>
    <property type="evidence" value="ECO:0000315"/>
    <property type="project" value="MGI"/>
</dbReference>
<dbReference type="GO" id="GO:0006325">
    <property type="term" value="P:chromatin organization"/>
    <property type="evidence" value="ECO:0000315"/>
    <property type="project" value="MGI"/>
</dbReference>
<dbReference type="GO" id="GO:0000122">
    <property type="term" value="P:negative regulation of transcription by RNA polymerase II"/>
    <property type="evidence" value="ECO:0000316"/>
    <property type="project" value="MGI"/>
</dbReference>
<dbReference type="GO" id="GO:0006334">
    <property type="term" value="P:nucleosome assembly"/>
    <property type="evidence" value="ECO:0007669"/>
    <property type="project" value="InterPro"/>
</dbReference>
<dbReference type="GO" id="GO:0006357">
    <property type="term" value="P:regulation of transcription by RNA polymerase II"/>
    <property type="evidence" value="ECO:0000315"/>
    <property type="project" value="MGI"/>
</dbReference>
<dbReference type="CDD" id="cd00073">
    <property type="entry name" value="H15"/>
    <property type="match status" value="1"/>
</dbReference>
<dbReference type="FunFam" id="1.10.10.10:FF:000075">
    <property type="entry name" value="Histone H1 like"/>
    <property type="match status" value="1"/>
</dbReference>
<dbReference type="Gene3D" id="1.10.10.10">
    <property type="entry name" value="Winged helix-like DNA-binding domain superfamily/Winged helix DNA-binding domain"/>
    <property type="match status" value="1"/>
</dbReference>
<dbReference type="InterPro" id="IPR005819">
    <property type="entry name" value="H1/H5"/>
</dbReference>
<dbReference type="InterPro" id="IPR005818">
    <property type="entry name" value="Histone_H1/H5_H15"/>
</dbReference>
<dbReference type="InterPro" id="IPR036388">
    <property type="entry name" value="WH-like_DNA-bd_sf"/>
</dbReference>
<dbReference type="InterPro" id="IPR036390">
    <property type="entry name" value="WH_DNA-bd_sf"/>
</dbReference>
<dbReference type="Pfam" id="PF00538">
    <property type="entry name" value="Linker_histone"/>
    <property type="match status" value="1"/>
</dbReference>
<dbReference type="PRINTS" id="PR00624">
    <property type="entry name" value="HISTONEH5"/>
</dbReference>
<dbReference type="SMART" id="SM00526">
    <property type="entry name" value="H15"/>
    <property type="match status" value="1"/>
</dbReference>
<dbReference type="SUPFAM" id="SSF46785">
    <property type="entry name" value="Winged helix' DNA-binding domain"/>
    <property type="match status" value="1"/>
</dbReference>
<dbReference type="PROSITE" id="PS51504">
    <property type="entry name" value="H15"/>
    <property type="match status" value="1"/>
</dbReference>
<evidence type="ECO:0000250" key="1"/>
<evidence type="ECO:0000250" key="2">
    <source>
        <dbReference type="UniProtKB" id="P02253"/>
    </source>
</evidence>
<evidence type="ECO:0000250" key="3">
    <source>
        <dbReference type="UniProtKB" id="P16403"/>
    </source>
</evidence>
<evidence type="ECO:0000250" key="4">
    <source>
        <dbReference type="UniProtKB" id="P43277"/>
    </source>
</evidence>
<evidence type="ECO:0000255" key="5">
    <source>
        <dbReference type="PROSITE-ProRule" id="PRU00837"/>
    </source>
</evidence>
<evidence type="ECO:0000256" key="6">
    <source>
        <dbReference type="SAM" id="MobiDB-lite"/>
    </source>
</evidence>
<evidence type="ECO:0000269" key="7">
    <source>
    </source>
</evidence>
<evidence type="ECO:0000269" key="8">
    <source>
    </source>
</evidence>
<evidence type="ECO:0000269" key="9">
    <source>
    </source>
</evidence>
<evidence type="ECO:0000269" key="10">
    <source>
    </source>
</evidence>
<evidence type="ECO:0000269" key="11">
    <source>
    </source>
</evidence>
<evidence type="ECO:0000312" key="12">
    <source>
        <dbReference type="MGI" id="MGI:1931526"/>
    </source>
</evidence>
<evidence type="ECO:0007744" key="13">
    <source>
    </source>
</evidence>
<feature type="initiator methionine" description="Removed" evidence="13">
    <location>
        <position position="1"/>
    </location>
</feature>
<feature type="chain" id="PRO_0000195915" description="Histone H1.2">
    <location>
        <begin position="2"/>
        <end position="212"/>
    </location>
</feature>
<feature type="domain" description="H15" evidence="5">
    <location>
        <begin position="36"/>
        <end position="109"/>
    </location>
</feature>
<feature type="region of interest" description="Disordered" evidence="6">
    <location>
        <begin position="1"/>
        <end position="41"/>
    </location>
</feature>
<feature type="region of interest" description="Disordered" evidence="6">
    <location>
        <begin position="98"/>
        <end position="212"/>
    </location>
</feature>
<feature type="compositionally biased region" description="Low complexity" evidence="6">
    <location>
        <begin position="1"/>
        <end position="17"/>
    </location>
</feature>
<feature type="compositionally biased region" description="Basic residues" evidence="6">
    <location>
        <begin position="20"/>
        <end position="35"/>
    </location>
</feature>
<feature type="compositionally biased region" description="Low complexity" evidence="6">
    <location>
        <begin position="121"/>
        <end position="148"/>
    </location>
</feature>
<feature type="compositionally biased region" description="Basic residues" evidence="6">
    <location>
        <begin position="149"/>
        <end position="160"/>
    </location>
</feature>
<feature type="compositionally biased region" description="Basic residues" evidence="6">
    <location>
        <begin position="169"/>
        <end position="212"/>
    </location>
</feature>
<feature type="modified residue" description="N-acetylserine" evidence="13">
    <location>
        <position position="2"/>
    </location>
</feature>
<feature type="modified residue" description="Phosphoserine" evidence="3">
    <location>
        <position position="2"/>
    </location>
</feature>
<feature type="modified residue" description="N6-acetyllysine" evidence="13">
    <location>
        <position position="17"/>
    </location>
</feature>
<feature type="modified residue" description="N6-(2-hydroxyisobutyryl)lysine" evidence="11">
    <location>
        <position position="23"/>
    </location>
</feature>
<feature type="modified residue" description="N6-(2-hydroxyisobutyryl)lysine" evidence="11">
    <location>
        <position position="26"/>
    </location>
</feature>
<feature type="modified residue" description="N6-(2-hydroxyisobutyryl)lysine" evidence="11">
    <location>
        <position position="27"/>
    </location>
</feature>
<feature type="modified residue" description="N6-(beta-hydroxybutyryl)lysine; alternate" evidence="4">
    <location>
        <position position="34"/>
    </location>
</feature>
<feature type="modified residue" description="N6-crotonyllysine; alternate" evidence="9">
    <location>
        <position position="34"/>
    </location>
</feature>
<feature type="modified residue" description="N6-methyllysine; alternate" evidence="3">
    <location>
        <position position="34"/>
    </location>
</feature>
<feature type="modified residue" description="N6-(2-hydroxyisobutyryl)lysine" evidence="11">
    <location>
        <position position="46"/>
    </location>
</feature>
<feature type="modified residue" description="N6-(2-hydroxyisobutyryl)lysine; alternate" evidence="11">
    <location>
        <position position="52"/>
    </location>
</feature>
<feature type="modified residue" description="N6-(beta-hydroxybutyryl)lysine; alternate" evidence="4">
    <location>
        <position position="52"/>
    </location>
</feature>
<feature type="modified residue" description="Citrulline" evidence="10">
    <location>
        <position position="54"/>
    </location>
</feature>
<feature type="modified residue" description="N6-(2-hydroxyisobutyryl)lysine" evidence="11">
    <location>
        <position position="63"/>
    </location>
</feature>
<feature type="modified residue" description="N6-(2-hydroxyisobutyryl)lysine; alternate" evidence="11">
    <location>
        <position position="64"/>
    </location>
</feature>
<feature type="modified residue" description="N6-(beta-hydroxybutyryl)lysine; alternate" evidence="4">
    <location>
        <position position="64"/>
    </location>
</feature>
<feature type="modified residue" description="N6-crotonyllysine; alternate" evidence="9">
    <location>
        <position position="64"/>
    </location>
</feature>
<feature type="modified residue" description="N6-(2-hydroxyisobutyryl)lysine" evidence="11">
    <location>
        <position position="75"/>
    </location>
</feature>
<feature type="modified residue" description="N6-(2-hydroxyisobutyryl)lysine" evidence="11">
    <location>
        <position position="81"/>
    </location>
</feature>
<feature type="modified residue" description="N6-(2-hydroxyisobutyryl)lysine; alternate" evidence="11">
    <location>
        <position position="85"/>
    </location>
</feature>
<feature type="modified residue" description="N6-(beta-hydroxybutyryl)lysine; alternate" evidence="4">
    <location>
        <position position="85"/>
    </location>
</feature>
<feature type="modified residue" description="N6-crotonyllysine; alternate" evidence="9">
    <location>
        <position position="85"/>
    </location>
</feature>
<feature type="modified residue" description="N6-(2-hydroxyisobutyryl)lysine; alternate" evidence="11">
    <location>
        <position position="90"/>
    </location>
</feature>
<feature type="modified residue" description="N6-(beta-hydroxybutyryl)lysine; alternate" evidence="4">
    <location>
        <position position="90"/>
    </location>
</feature>
<feature type="modified residue" description="N6-crotonyllysine; alternate" evidence="3">
    <location>
        <position position="90"/>
    </location>
</feature>
<feature type="modified residue" description="N6-(2-hydroxyisobutyryl)lysine; alternate" evidence="11">
    <location>
        <position position="97"/>
    </location>
</feature>
<feature type="modified residue" description="N6-crotonyllysine; alternate" evidence="3">
    <location>
        <position position="97"/>
    </location>
</feature>
<feature type="modified residue" description="N6-succinyllysine; alternate" evidence="13">
    <location>
        <position position="97"/>
    </location>
</feature>
<feature type="modified residue" description="Phosphoserine; by PKC" evidence="2">
    <location>
        <position position="104"/>
    </location>
</feature>
<feature type="modified residue" description="N6-(beta-hydroxybutyryl)lysine" evidence="4">
    <location>
        <position position="106"/>
    </location>
</feature>
<feature type="modified residue" description="N6-(2-hydroxyisobutyryl)lysine" evidence="11">
    <location>
        <position position="110"/>
    </location>
</feature>
<feature type="modified residue" description="N6-(2-hydroxyisobutyryl)lysine" evidence="11">
    <location>
        <position position="117"/>
    </location>
</feature>
<feature type="modified residue" description="N6-(2-hydroxyisobutyryl)lysine" evidence="11">
    <location>
        <position position="121"/>
    </location>
</feature>
<feature type="modified residue" description="N6-(2-hydroxyisobutyryl)lysine" evidence="11">
    <location>
        <position position="129"/>
    </location>
</feature>
<feature type="modified residue" description="N6-(2-hydroxyisobutyryl)lysine" evidence="11">
    <location>
        <position position="136"/>
    </location>
</feature>
<feature type="modified residue" description="Phosphothreonine" evidence="3">
    <location>
        <position position="146"/>
    </location>
</feature>
<feature type="modified residue" description="N6-(2-hydroxyisobutyryl)lysine" evidence="11">
    <location>
        <position position="148"/>
    </location>
</feature>
<feature type="modified residue" description="N6-(2-hydroxyisobutyryl)lysine; alternate" evidence="11">
    <location>
        <position position="159"/>
    </location>
</feature>
<feature type="modified residue" description="N6-crotonyllysine; alternate" evidence="9">
    <location>
        <position position="159"/>
    </location>
</feature>
<feature type="modified residue" description="N6-(2-hydroxyisobutyryl)lysine; alternate" evidence="11">
    <location>
        <position position="168"/>
    </location>
</feature>
<feature type="modified residue" description="N6-crotonyllysine; alternate" evidence="9">
    <location>
        <position position="168"/>
    </location>
</feature>
<feature type="modified residue" description="N6-methyllysine; by EHMT1 and EHMT2" evidence="3">
    <location>
        <position position="186"/>
    </location>
</feature>
<feature type="modified residue" description="ADP-ribosylserine" evidence="3">
    <location>
        <position position="187"/>
    </location>
</feature>
<feature type="modified residue" description="N6-(2-hydroxyisobutyryl)lysine" evidence="11">
    <location>
        <position position="212"/>
    </location>
</feature>
<feature type="mutagenesis site" description="Mimics the charge change that accompanies citrullination, resulting in impaired nucleosome-binding." evidence="10">
    <original>R</original>
    <variation>A</variation>
    <location>
        <position position="54"/>
    </location>
</feature>
<feature type="mutagenesis site" description="Retains the positive charge, resulting in slightly decreased nucleosome-binding." evidence="10">
    <original>R</original>
    <variation>K</variation>
    <location>
        <position position="54"/>
    </location>
</feature>